<protein>
    <recommendedName>
        <fullName>Inositol 1,4,5-trisphosphate receptor-interacting protein-like 2</fullName>
    </recommendedName>
</protein>
<keyword id="KW-0472">Membrane</keyword>
<keyword id="KW-0597">Phosphoprotein</keyword>
<keyword id="KW-1267">Proteomics identification</keyword>
<keyword id="KW-1185">Reference proteome</keyword>
<keyword id="KW-0732">Signal</keyword>
<keyword id="KW-0812">Transmembrane</keyword>
<keyword id="KW-1133">Transmembrane helix</keyword>
<gene>
    <name type="primary">ITPRIPL2</name>
</gene>
<sequence length="535" mass="58446">MSVHYTLNLRVFWPLVTGLCTALVCLYHVLRGSGGARAEPADGVDGGFPLLKVAVLLLLSYVLLRCRHAVRQRFLPGSPRLEGHAAFSSRHFREPGLSILLESYYEHEVRLSPHVLGHSKAHVSRIVGELVRAGRARGSPGLIPGGALALAFRGDFIQVGSAYEQHKIRRPDSFDVLVPLRLPPLVALEPRSLGEEPALAPAFRGCFLCALKAPPSPSGASGGHWLRDCKPFADAFCVDVRGRRHLSATLVLRWFQSHLQRSLATVRYSLEGRCRVTLTPGGLEQPPTLHILPCRTDYGCCRLSMAVRLIPAVHLGDGVFLVAPPPPPLPSAPLLELPEGLRAEALWGVNTARQEQKLLSWLQERAAPGACYLKCLQLLKALRDLGARGLDSAAATQWGRILSSYVLKTVLLAVLLRKGAPGQGWDEEHLGRCLEELVQFLRDCLLRRHTLFHCVLGPGGAAAEVGPLPKALREAAPVDLLAAFDGHARELAAARLLSTWQRLPQLLRAYGGPRYLARCPPPRSQRTQGFLEGEP</sequence>
<organism>
    <name type="scientific">Homo sapiens</name>
    <name type="common">Human</name>
    <dbReference type="NCBI Taxonomy" id="9606"/>
    <lineage>
        <taxon>Eukaryota</taxon>
        <taxon>Metazoa</taxon>
        <taxon>Chordata</taxon>
        <taxon>Craniata</taxon>
        <taxon>Vertebrata</taxon>
        <taxon>Euteleostomi</taxon>
        <taxon>Mammalia</taxon>
        <taxon>Eutheria</taxon>
        <taxon>Euarchontoglires</taxon>
        <taxon>Primates</taxon>
        <taxon>Haplorrhini</taxon>
        <taxon>Catarrhini</taxon>
        <taxon>Hominidae</taxon>
        <taxon>Homo</taxon>
    </lineage>
</organism>
<evidence type="ECO:0000255" key="1"/>
<evidence type="ECO:0000305" key="2"/>
<evidence type="ECO:0007744" key="3">
    <source>
    </source>
</evidence>
<dbReference type="EMBL" id="CH471186">
    <property type="protein sequence ID" value="EAW50272.1"/>
    <property type="molecule type" value="Genomic_DNA"/>
</dbReference>
<dbReference type="EMBL" id="BC101749">
    <property type="protein sequence ID" value="AAI01750.1"/>
    <property type="molecule type" value="mRNA"/>
</dbReference>
<dbReference type="EMBL" id="BC101751">
    <property type="protein sequence ID" value="AAI01752.1"/>
    <property type="molecule type" value="mRNA"/>
</dbReference>
<dbReference type="CCDS" id="CCDS32395.1"/>
<dbReference type="RefSeq" id="NP_001030013.1">
    <property type="nucleotide sequence ID" value="NM_001034841.4"/>
</dbReference>
<dbReference type="BioGRID" id="127808">
    <property type="interactions" value="33"/>
</dbReference>
<dbReference type="FunCoup" id="Q3MIP1">
    <property type="interactions" value="138"/>
</dbReference>
<dbReference type="IntAct" id="Q3MIP1">
    <property type="interactions" value="16"/>
</dbReference>
<dbReference type="STRING" id="9606.ENSP00000370849"/>
<dbReference type="iPTMnet" id="Q3MIP1"/>
<dbReference type="PhosphoSitePlus" id="Q3MIP1"/>
<dbReference type="BioMuta" id="ITPRIPL2"/>
<dbReference type="DMDM" id="121942822"/>
<dbReference type="jPOST" id="Q3MIP1"/>
<dbReference type="MassIVE" id="Q3MIP1"/>
<dbReference type="PaxDb" id="9606-ENSP00000370849"/>
<dbReference type="PeptideAtlas" id="Q3MIP1"/>
<dbReference type="ProteomicsDB" id="61790"/>
<dbReference type="Antibodypedia" id="62727">
    <property type="antibodies" value="22 antibodies from 10 providers"/>
</dbReference>
<dbReference type="DNASU" id="162073"/>
<dbReference type="Ensembl" id="ENST00000381440.5">
    <property type="protein sequence ID" value="ENSP00000370849.3"/>
    <property type="gene ID" value="ENSG00000205730.7"/>
</dbReference>
<dbReference type="GeneID" id="162073"/>
<dbReference type="KEGG" id="hsa:162073"/>
<dbReference type="MANE-Select" id="ENST00000381440.5">
    <property type="protein sequence ID" value="ENSP00000370849.3"/>
    <property type="RefSeq nucleotide sequence ID" value="NM_001034841.4"/>
    <property type="RefSeq protein sequence ID" value="NP_001030013.1"/>
</dbReference>
<dbReference type="UCSC" id="uc002dfu.5">
    <property type="organism name" value="human"/>
</dbReference>
<dbReference type="AGR" id="HGNC:27257"/>
<dbReference type="CTD" id="162073"/>
<dbReference type="GeneCards" id="ITPRIPL2"/>
<dbReference type="HGNC" id="HGNC:27257">
    <property type="gene designation" value="ITPRIPL2"/>
</dbReference>
<dbReference type="HPA" id="ENSG00000205730">
    <property type="expression patterns" value="Low tissue specificity"/>
</dbReference>
<dbReference type="neXtProt" id="NX_Q3MIP1"/>
<dbReference type="OpenTargets" id="ENSG00000205730"/>
<dbReference type="PharmGKB" id="PA164721117"/>
<dbReference type="VEuPathDB" id="HostDB:ENSG00000205730"/>
<dbReference type="eggNOG" id="ENOG502QT2J">
    <property type="taxonomic scope" value="Eukaryota"/>
</dbReference>
<dbReference type="GeneTree" id="ENSGT01050000244827"/>
<dbReference type="HOGENOM" id="CLU_043756_0_0_1"/>
<dbReference type="InParanoid" id="Q3MIP1"/>
<dbReference type="OMA" id="RVYGGPR"/>
<dbReference type="OrthoDB" id="8745755at2759"/>
<dbReference type="PAN-GO" id="Q3MIP1">
    <property type="GO annotations" value="0 GO annotations based on evolutionary models"/>
</dbReference>
<dbReference type="PhylomeDB" id="Q3MIP1"/>
<dbReference type="TreeFam" id="TF332277"/>
<dbReference type="PathwayCommons" id="Q3MIP1"/>
<dbReference type="SignaLink" id="Q3MIP1"/>
<dbReference type="BioGRID-ORCS" id="162073">
    <property type="hits" value="11 hits in 1149 CRISPR screens"/>
</dbReference>
<dbReference type="ChiTaRS" id="ITPRIPL2">
    <property type="organism name" value="human"/>
</dbReference>
<dbReference type="GenomeRNAi" id="162073"/>
<dbReference type="Pharos" id="Q3MIP1">
    <property type="development level" value="Tdark"/>
</dbReference>
<dbReference type="PRO" id="PR:Q3MIP1"/>
<dbReference type="Proteomes" id="UP000005640">
    <property type="component" value="Chromosome 16"/>
</dbReference>
<dbReference type="RNAct" id="Q3MIP1">
    <property type="molecule type" value="protein"/>
</dbReference>
<dbReference type="Bgee" id="ENSG00000205730">
    <property type="expression patterns" value="Expressed in tendon of biceps brachii and 191 other cell types or tissues"/>
</dbReference>
<dbReference type="GO" id="GO:0016020">
    <property type="term" value="C:membrane"/>
    <property type="evidence" value="ECO:0007669"/>
    <property type="project" value="UniProtKB-SubCell"/>
</dbReference>
<dbReference type="Gene3D" id="1.10.1410.40">
    <property type="match status" value="1"/>
</dbReference>
<dbReference type="Gene3D" id="3.30.460.90">
    <property type="match status" value="1"/>
</dbReference>
<dbReference type="InterPro" id="IPR026250">
    <property type="entry name" value="ITPRIP-like"/>
</dbReference>
<dbReference type="InterPro" id="IPR046906">
    <property type="entry name" value="Mab-21_HhH/H2TH-like"/>
</dbReference>
<dbReference type="InterPro" id="IPR024810">
    <property type="entry name" value="MAB21L/cGLR"/>
</dbReference>
<dbReference type="PANTHER" id="PTHR10656">
    <property type="entry name" value="CELL FATE DETERMINING PROTEIN MAB21-RELATED"/>
    <property type="match status" value="1"/>
</dbReference>
<dbReference type="PANTHER" id="PTHR10656:SF9">
    <property type="entry name" value="INOSITOL 1,4,5-TRISPHOSPHATE RECEPTOR-INTERACTING PROTEIN-LIKE 2"/>
    <property type="match status" value="1"/>
</dbReference>
<dbReference type="Pfam" id="PF20266">
    <property type="entry name" value="Mab-21_C"/>
    <property type="match status" value="1"/>
</dbReference>
<dbReference type="PRINTS" id="PR02107">
    <property type="entry name" value="INOS145TPRIP"/>
</dbReference>
<dbReference type="SMART" id="SM01265">
    <property type="entry name" value="Mab-21"/>
    <property type="match status" value="1"/>
</dbReference>
<reference key="1">
    <citation type="submission" date="2005-07" db="EMBL/GenBank/DDBJ databases">
        <authorList>
            <person name="Mural R.J."/>
            <person name="Istrail S."/>
            <person name="Sutton G.G."/>
            <person name="Florea L."/>
            <person name="Halpern A.L."/>
            <person name="Mobarry C.M."/>
            <person name="Lippert R."/>
            <person name="Walenz B."/>
            <person name="Shatkay H."/>
            <person name="Dew I."/>
            <person name="Miller J.R."/>
            <person name="Flanigan M.J."/>
            <person name="Edwards N.J."/>
            <person name="Bolanos R."/>
            <person name="Fasulo D."/>
            <person name="Halldorsson B.V."/>
            <person name="Hannenhalli S."/>
            <person name="Turner R."/>
            <person name="Yooseph S."/>
            <person name="Lu F."/>
            <person name="Nusskern D.R."/>
            <person name="Shue B.C."/>
            <person name="Zheng X.H."/>
            <person name="Zhong F."/>
            <person name="Delcher A.L."/>
            <person name="Huson D.H."/>
            <person name="Kravitz S.A."/>
            <person name="Mouchard L."/>
            <person name="Reinert K."/>
            <person name="Remington K.A."/>
            <person name="Clark A.G."/>
            <person name="Waterman M.S."/>
            <person name="Eichler E.E."/>
            <person name="Adams M.D."/>
            <person name="Hunkapiller M.W."/>
            <person name="Myers E.W."/>
            <person name="Venter J.C."/>
        </authorList>
    </citation>
    <scope>NUCLEOTIDE SEQUENCE [LARGE SCALE GENOMIC DNA]</scope>
</reference>
<reference key="2">
    <citation type="journal article" date="2004" name="Genome Res.">
        <title>The status, quality, and expansion of the NIH full-length cDNA project: the Mammalian Gene Collection (MGC).</title>
        <authorList>
            <consortium name="The MGC Project Team"/>
        </authorList>
    </citation>
    <scope>NUCLEOTIDE SEQUENCE [LARGE SCALE MRNA]</scope>
    <source>
        <tissue>Liver</tissue>
    </source>
</reference>
<reference key="3">
    <citation type="journal article" date="2010" name="Sci. Signal.">
        <title>Quantitative phosphoproteomics reveals widespread full phosphorylation site occupancy during mitosis.</title>
        <authorList>
            <person name="Olsen J.V."/>
            <person name="Vermeulen M."/>
            <person name="Santamaria A."/>
            <person name="Kumar C."/>
            <person name="Miller M.L."/>
            <person name="Jensen L.J."/>
            <person name="Gnad F."/>
            <person name="Cox J."/>
            <person name="Jensen T.S."/>
            <person name="Nigg E.A."/>
            <person name="Brunak S."/>
            <person name="Mann M."/>
        </authorList>
    </citation>
    <scope>PHOSPHORYLATION [LARGE SCALE ANALYSIS] AT SER-139</scope>
    <scope>IDENTIFICATION BY MASS SPECTROMETRY [LARGE SCALE ANALYSIS]</scope>
    <source>
        <tissue>Cervix carcinoma</tissue>
    </source>
</reference>
<feature type="signal peptide" evidence="1">
    <location>
        <begin position="1"/>
        <end position="38"/>
    </location>
</feature>
<feature type="chain" id="PRO_0000336093" description="Inositol 1,4,5-trisphosphate receptor-interacting protein-like 2">
    <location>
        <begin position="39"/>
        <end position="535"/>
    </location>
</feature>
<feature type="topological domain" description="Extracellular" evidence="1">
    <location>
        <begin position="39"/>
        <end position="43"/>
    </location>
</feature>
<feature type="transmembrane region" description="Helical" evidence="1">
    <location>
        <begin position="44"/>
        <end position="64"/>
    </location>
</feature>
<feature type="topological domain" description="Cytoplasmic" evidence="1">
    <location>
        <begin position="65"/>
        <end position="535"/>
    </location>
</feature>
<feature type="modified residue" description="Phosphoserine" evidence="3">
    <location>
        <position position="139"/>
    </location>
</feature>
<feature type="sequence variant" id="VAR_043549" description="In dbSNP:rs8051801.">
    <original>C</original>
    <variation>S</variation>
    <location>
        <position position="237"/>
    </location>
</feature>
<feature type="sequence variant" id="VAR_043550" description="In dbSNP:rs11074362.">
    <original>P</original>
    <variation>S</variation>
    <location>
        <position position="522"/>
    </location>
</feature>
<name>IPIL2_HUMAN</name>
<accession>Q3MIP1</accession>
<comment type="subcellular location">
    <subcellularLocation>
        <location>Membrane</location>
        <topology>Single-pass type I membrane protein</topology>
    </subcellularLocation>
</comment>
<comment type="similarity">
    <text evidence="2">Belongs to the ITPRIP family.</text>
</comment>
<proteinExistence type="evidence at protein level"/>